<proteinExistence type="inferred from homology"/>
<protein>
    <recommendedName>
        <fullName evidence="1">Ribosome biogenesis protein WDR12 homolog</fullName>
    </recommendedName>
</protein>
<feature type="chain" id="PRO_0000369554" description="Ribosome biogenesis protein WDR12 homolog">
    <location>
        <begin position="1"/>
        <end position="425"/>
    </location>
</feature>
<feature type="repeat" description="WD 1">
    <location>
        <begin position="106"/>
        <end position="143"/>
    </location>
</feature>
<feature type="repeat" description="WD 2">
    <location>
        <begin position="145"/>
        <end position="187"/>
    </location>
</feature>
<feature type="repeat" description="WD 3">
    <location>
        <begin position="194"/>
        <end position="233"/>
    </location>
</feature>
<feature type="repeat" description="WD 4">
    <location>
        <begin position="258"/>
        <end position="296"/>
    </location>
</feature>
<feature type="repeat" description="WD 5">
    <location>
        <begin position="298"/>
        <end position="337"/>
    </location>
</feature>
<feature type="repeat" description="WD 6">
    <location>
        <begin position="343"/>
        <end position="383"/>
    </location>
</feature>
<feature type="repeat" description="WD 7">
    <location>
        <begin position="387"/>
        <end position="425"/>
    </location>
</feature>
<feature type="region of interest" description="Ubiquitin-like (UBL) domain" evidence="1">
    <location>
        <begin position="13"/>
        <end position="94"/>
    </location>
</feature>
<feature type="region of interest" description="Disordered" evidence="2">
    <location>
        <begin position="227"/>
        <end position="247"/>
    </location>
</feature>
<comment type="function">
    <text evidence="1">Required for maturation of ribosomal RNAs and formation of the large ribosomal subunit.</text>
</comment>
<comment type="subcellular location">
    <subcellularLocation>
        <location evidence="1">Nucleus</location>
        <location evidence="1">Nucleolus</location>
    </subcellularLocation>
    <subcellularLocation>
        <location evidence="1">Nucleus</location>
        <location evidence="1">Nucleoplasm</location>
    </subcellularLocation>
</comment>
<comment type="similarity">
    <text evidence="1">Belongs to the WD repeat WDR12/YTM1 family.</text>
</comment>
<comment type="sequence caution" evidence="3">
    <conflict type="erroneous gene model prediction">
        <sequence resource="EMBL-CDS" id="EDS34583"/>
    </conflict>
</comment>
<comment type="sequence caution" evidence="3">
    <conflict type="frameshift">
        <sequence resource="EMBL-CDS" id="EDS34583"/>
    </conflict>
</comment>
<accession>B0W517</accession>
<gene>
    <name type="ORF">CPIJ001500</name>
</gene>
<organism>
    <name type="scientific">Culex quinquefasciatus</name>
    <name type="common">Southern house mosquito</name>
    <name type="synonym">Culex pungens</name>
    <dbReference type="NCBI Taxonomy" id="7176"/>
    <lineage>
        <taxon>Eukaryota</taxon>
        <taxon>Metazoa</taxon>
        <taxon>Ecdysozoa</taxon>
        <taxon>Arthropoda</taxon>
        <taxon>Hexapoda</taxon>
        <taxon>Insecta</taxon>
        <taxon>Pterygota</taxon>
        <taxon>Neoptera</taxon>
        <taxon>Endopterygota</taxon>
        <taxon>Diptera</taxon>
        <taxon>Nematocera</taxon>
        <taxon>Culicoidea</taxon>
        <taxon>Culicidae</taxon>
        <taxon>Culicinae</taxon>
        <taxon>Culicini</taxon>
        <taxon>Culex</taxon>
        <taxon>Culex</taxon>
    </lineage>
</organism>
<dbReference type="EMBL" id="DS231840">
    <property type="protein sequence ID" value="EDS34583.1"/>
    <property type="status" value="ALT_SEQ"/>
    <property type="molecule type" value="Genomic_DNA"/>
</dbReference>
<dbReference type="RefSeq" id="XP_001843801.1">
    <property type="nucleotide sequence ID" value="XM_001843749.1"/>
</dbReference>
<dbReference type="SMR" id="B0W517"/>
<dbReference type="FunCoup" id="B0W517">
    <property type="interactions" value="1781"/>
</dbReference>
<dbReference type="STRING" id="7176.B0W517"/>
<dbReference type="KEGG" id="cqu:CpipJ_CPIJ001500"/>
<dbReference type="VEuPathDB" id="VectorBase:CPIJ001500"/>
<dbReference type="VEuPathDB" id="VectorBase:CQUJHB008532"/>
<dbReference type="eggNOG" id="KOG0313">
    <property type="taxonomic scope" value="Eukaryota"/>
</dbReference>
<dbReference type="HOGENOM" id="CLU_000288_57_0_1"/>
<dbReference type="InParanoid" id="B0W517"/>
<dbReference type="OrthoDB" id="10251381at2759"/>
<dbReference type="Proteomes" id="UP000002320">
    <property type="component" value="Unassembled WGS sequence"/>
</dbReference>
<dbReference type="GO" id="GO:0005654">
    <property type="term" value="C:nucleoplasm"/>
    <property type="evidence" value="ECO:0007669"/>
    <property type="project" value="UniProtKB-SubCell"/>
</dbReference>
<dbReference type="GO" id="GO:0070545">
    <property type="term" value="C:PeBoW complex"/>
    <property type="evidence" value="ECO:0000250"/>
    <property type="project" value="UniProtKB"/>
</dbReference>
<dbReference type="GO" id="GO:0030687">
    <property type="term" value="C:preribosome, large subunit precursor"/>
    <property type="evidence" value="ECO:0007669"/>
    <property type="project" value="UniProtKB-UniRule"/>
</dbReference>
<dbReference type="GO" id="GO:0043021">
    <property type="term" value="F:ribonucleoprotein complex binding"/>
    <property type="evidence" value="ECO:0007669"/>
    <property type="project" value="UniProtKB-UniRule"/>
</dbReference>
<dbReference type="GO" id="GO:0000466">
    <property type="term" value="P:maturation of 5.8S rRNA from tricistronic rRNA transcript (SSU-rRNA, 5.8S rRNA, LSU-rRNA)"/>
    <property type="evidence" value="ECO:0007669"/>
    <property type="project" value="UniProtKB-UniRule"/>
</dbReference>
<dbReference type="GO" id="GO:0000463">
    <property type="term" value="P:maturation of LSU-rRNA from tricistronic rRNA transcript (SSU-rRNA, 5.8S rRNA, LSU-rRNA)"/>
    <property type="evidence" value="ECO:0000250"/>
    <property type="project" value="UniProtKB"/>
</dbReference>
<dbReference type="CDD" id="cd00200">
    <property type="entry name" value="WD40"/>
    <property type="match status" value="1"/>
</dbReference>
<dbReference type="FunFam" id="2.130.10.10:FF:001328">
    <property type="entry name" value="Ribosome biogenesis protein WDR12 homolog"/>
    <property type="match status" value="1"/>
</dbReference>
<dbReference type="Gene3D" id="2.130.10.10">
    <property type="entry name" value="YVTN repeat-like/Quinoprotein amine dehydrogenase"/>
    <property type="match status" value="1"/>
</dbReference>
<dbReference type="HAMAP" id="MF_03029">
    <property type="entry name" value="WDR12"/>
    <property type="match status" value="1"/>
</dbReference>
<dbReference type="InterPro" id="IPR020472">
    <property type="entry name" value="G-protein_beta_WD-40_rep"/>
</dbReference>
<dbReference type="InterPro" id="IPR012972">
    <property type="entry name" value="NLE"/>
</dbReference>
<dbReference type="InterPro" id="IPR015943">
    <property type="entry name" value="WD40/YVTN_repeat-like_dom_sf"/>
</dbReference>
<dbReference type="InterPro" id="IPR019775">
    <property type="entry name" value="WD40_repeat_CS"/>
</dbReference>
<dbReference type="InterPro" id="IPR036322">
    <property type="entry name" value="WD40_repeat_dom_sf"/>
</dbReference>
<dbReference type="InterPro" id="IPR001680">
    <property type="entry name" value="WD40_rpt"/>
</dbReference>
<dbReference type="InterPro" id="IPR028599">
    <property type="entry name" value="WDR12/Ytm1"/>
</dbReference>
<dbReference type="PANTHER" id="PTHR19855:SF11">
    <property type="entry name" value="RIBOSOME BIOGENESIS PROTEIN WDR12"/>
    <property type="match status" value="1"/>
</dbReference>
<dbReference type="PANTHER" id="PTHR19855">
    <property type="entry name" value="WD40 REPEAT PROTEIN 12, 37"/>
    <property type="match status" value="1"/>
</dbReference>
<dbReference type="Pfam" id="PF08154">
    <property type="entry name" value="NLE"/>
    <property type="match status" value="1"/>
</dbReference>
<dbReference type="Pfam" id="PF00400">
    <property type="entry name" value="WD40"/>
    <property type="match status" value="6"/>
</dbReference>
<dbReference type="PRINTS" id="PR00320">
    <property type="entry name" value="GPROTEINBRPT"/>
</dbReference>
<dbReference type="SMART" id="SM00320">
    <property type="entry name" value="WD40"/>
    <property type="match status" value="7"/>
</dbReference>
<dbReference type="SUPFAM" id="SSF50978">
    <property type="entry name" value="WD40 repeat-like"/>
    <property type="match status" value="1"/>
</dbReference>
<dbReference type="PROSITE" id="PS00678">
    <property type="entry name" value="WD_REPEATS_1"/>
    <property type="match status" value="1"/>
</dbReference>
<dbReference type="PROSITE" id="PS50082">
    <property type="entry name" value="WD_REPEATS_2"/>
    <property type="match status" value="3"/>
</dbReference>
<dbReference type="PROSITE" id="PS50294">
    <property type="entry name" value="WD_REPEATS_REGION"/>
    <property type="match status" value="1"/>
</dbReference>
<reference key="1">
    <citation type="submission" date="2007-03" db="EMBL/GenBank/DDBJ databases">
        <title>Annotation of Culex pipiens quinquefasciatus.</title>
        <authorList>
            <consortium name="The Broad Institute Genome Sequencing Platform"/>
            <person name="Atkinson P.W."/>
            <person name="Hemingway J."/>
            <person name="Christensen B.M."/>
            <person name="Higgs S."/>
            <person name="Kodira C.D."/>
            <person name="Hannick L.I."/>
            <person name="Megy K."/>
            <person name="O'Leary S.B."/>
            <person name="Pearson M."/>
            <person name="Haas B.J."/>
            <person name="Mauceli E."/>
            <person name="Wortman J.R."/>
            <person name="Lee N.H."/>
            <person name="Guigo R."/>
            <person name="Stanke M."/>
            <person name="Alvarado L."/>
            <person name="Amedeo P."/>
            <person name="Antoine C.H."/>
            <person name="Arensburger P."/>
            <person name="Bidwell S.L."/>
            <person name="Crawford M."/>
            <person name="Camaro F."/>
            <person name="Devon K."/>
            <person name="Engels R."/>
            <person name="Hammond M."/>
            <person name="Howarth C."/>
            <person name="Koehrsen M."/>
            <person name="Lawson D."/>
            <person name="Montgomery P."/>
            <person name="Nene V."/>
            <person name="Nusbaum C."/>
            <person name="Puiu D."/>
            <person name="Romero-Severson J."/>
            <person name="Severson D.W."/>
            <person name="Shumway M."/>
            <person name="Sisk P."/>
            <person name="Stolte C."/>
            <person name="Zeng Q."/>
            <person name="Eisenstadt E."/>
            <person name="Fraser-Liggett C.M."/>
            <person name="Strausberg R."/>
            <person name="Galagan J."/>
            <person name="Birren B."/>
            <person name="Collins F.H."/>
        </authorList>
    </citation>
    <scope>NUCLEOTIDE SEQUENCE [LARGE SCALE GENOMIC DNA]</scope>
    <source>
        <strain>JHB</strain>
    </source>
</reference>
<keyword id="KW-0539">Nucleus</keyword>
<keyword id="KW-1185">Reference proteome</keyword>
<keyword id="KW-0677">Repeat</keyword>
<keyword id="KW-0690">Ribosome biogenesis</keyword>
<keyword id="KW-0698">rRNA processing</keyword>
<keyword id="KW-0853">WD repeat</keyword>
<name>WDR12_CULQU</name>
<sequence length="425" mass="47350">MALKITGKAEGQLQLHLITKQKQFAVPDVPYSIRANVSTKELNVLVNTLLKDAGNAEAGKVEFDFLLNGEFPLGQHLKERDVSFEDTVELEYVERYPAPEPQDCLLHDDWVSAVEARDNWILTGCYDNTLNLWTTKGKHKLTIPGHIAPVKGVTWISLDEEKGVFASASQDQTVMLWEWNVAANSVECVQVCKGHERGVDCIAANGSKTKMATGSWDTMLKIWSTDVRSGGGDSEPSTSKRQKLDQGSARTPLMTLAGHRECISGVQWIDDNTLVTSSWDHTIKIWDLALNGIKSEISGNKSFFDLSYSKLNGLIITASPDKNLRLYDPKSNQGTLVKNTYLGHTQWVQSVRWSTTNEYLFVSGAYDNHVKLWDYRSPKAPIFELIGHEDKVLACDWSNPRFILSGGSDNSVRVFKSKIAIGGEK</sequence>
<evidence type="ECO:0000255" key="1">
    <source>
        <dbReference type="HAMAP-Rule" id="MF_03029"/>
    </source>
</evidence>
<evidence type="ECO:0000256" key="2">
    <source>
        <dbReference type="SAM" id="MobiDB-lite"/>
    </source>
</evidence>
<evidence type="ECO:0000305" key="3"/>